<proteinExistence type="evidence at transcript level"/>
<evidence type="ECO:0000250" key="1">
    <source>
        <dbReference type="UniProtKB" id="Q16630"/>
    </source>
</evidence>
<evidence type="ECO:0000250" key="2">
    <source>
        <dbReference type="UniProtKB" id="Q6NVF9"/>
    </source>
</evidence>
<evidence type="ECO:0000255" key="3">
    <source>
        <dbReference type="PROSITE-ProRule" id="PRU00176"/>
    </source>
</evidence>
<evidence type="ECO:0000256" key="4">
    <source>
        <dbReference type="SAM" id="MobiDB-lite"/>
    </source>
</evidence>
<evidence type="ECO:0000305" key="5"/>
<organism>
    <name type="scientific">Pongo abelii</name>
    <name type="common">Sumatran orangutan</name>
    <name type="synonym">Pongo pygmaeus abelii</name>
    <dbReference type="NCBI Taxonomy" id="9601"/>
    <lineage>
        <taxon>Eukaryota</taxon>
        <taxon>Metazoa</taxon>
        <taxon>Chordata</taxon>
        <taxon>Craniata</taxon>
        <taxon>Vertebrata</taxon>
        <taxon>Euteleostomi</taxon>
        <taxon>Mammalia</taxon>
        <taxon>Eutheria</taxon>
        <taxon>Euarchontoglires</taxon>
        <taxon>Primates</taxon>
        <taxon>Haplorrhini</taxon>
        <taxon>Catarrhini</taxon>
        <taxon>Hominidae</taxon>
        <taxon>Pongo</taxon>
    </lineage>
</organism>
<dbReference type="EMBL" id="CR926054">
    <property type="protein sequence ID" value="CAI29685.1"/>
    <property type="molecule type" value="mRNA"/>
</dbReference>
<dbReference type="RefSeq" id="NP_001127689.1">
    <property type="nucleotide sequence ID" value="NM_001134217.1"/>
</dbReference>
<dbReference type="SMR" id="Q5NVH8"/>
<dbReference type="STRING" id="9601.ENSPPYP00000005418"/>
<dbReference type="GeneID" id="100174771"/>
<dbReference type="KEGG" id="pon:100174771"/>
<dbReference type="CTD" id="11052"/>
<dbReference type="eggNOG" id="KOG4849">
    <property type="taxonomic scope" value="Eukaryota"/>
</dbReference>
<dbReference type="InParanoid" id="Q5NVH8"/>
<dbReference type="OrthoDB" id="10065185at2759"/>
<dbReference type="Proteomes" id="UP000001595">
    <property type="component" value="Unplaced"/>
</dbReference>
<dbReference type="GO" id="GO:0005737">
    <property type="term" value="C:cytoplasm"/>
    <property type="evidence" value="ECO:0000250"/>
    <property type="project" value="UniProtKB"/>
</dbReference>
<dbReference type="GO" id="GO:0035061">
    <property type="term" value="C:interchromatin granule"/>
    <property type="evidence" value="ECO:0000250"/>
    <property type="project" value="UniProtKB"/>
</dbReference>
<dbReference type="GO" id="GO:0005849">
    <property type="term" value="C:mRNA cleavage factor complex"/>
    <property type="evidence" value="ECO:0000250"/>
    <property type="project" value="UniProtKB"/>
</dbReference>
<dbReference type="GO" id="GO:0016607">
    <property type="term" value="C:nuclear speck"/>
    <property type="evidence" value="ECO:0000250"/>
    <property type="project" value="UniProtKB"/>
</dbReference>
<dbReference type="GO" id="GO:0005654">
    <property type="term" value="C:nucleoplasm"/>
    <property type="evidence" value="ECO:0000250"/>
    <property type="project" value="UniProtKB"/>
</dbReference>
<dbReference type="GO" id="GO:0005634">
    <property type="term" value="C:nucleus"/>
    <property type="evidence" value="ECO:0000250"/>
    <property type="project" value="UniProtKB"/>
</dbReference>
<dbReference type="GO" id="GO:0042382">
    <property type="term" value="C:paraspeckles"/>
    <property type="evidence" value="ECO:0000250"/>
    <property type="project" value="UniProtKB"/>
</dbReference>
<dbReference type="GO" id="GO:0005726">
    <property type="term" value="C:perichromatin fibrils"/>
    <property type="evidence" value="ECO:0000250"/>
    <property type="project" value="UniProtKB"/>
</dbReference>
<dbReference type="GO" id="GO:1990448">
    <property type="term" value="F:exon-exon junction complex binding"/>
    <property type="evidence" value="ECO:0000250"/>
    <property type="project" value="UniProtKB"/>
</dbReference>
<dbReference type="GO" id="GO:0003729">
    <property type="term" value="F:mRNA binding"/>
    <property type="evidence" value="ECO:0000250"/>
    <property type="project" value="UniProtKB"/>
</dbReference>
<dbReference type="GO" id="GO:0043023">
    <property type="term" value="F:ribosomal large subunit binding"/>
    <property type="evidence" value="ECO:0000250"/>
    <property type="project" value="UniProtKB"/>
</dbReference>
<dbReference type="GO" id="GO:0180010">
    <property type="term" value="P:co-transcriptional mRNA 3'-end processing, cleavage and polyadenylation pathway"/>
    <property type="evidence" value="ECO:0000250"/>
    <property type="project" value="UniProtKB"/>
</dbReference>
<dbReference type="GO" id="GO:0110104">
    <property type="term" value="P:mRNA alternative polyadenylation"/>
    <property type="evidence" value="ECO:0000250"/>
    <property type="project" value="UniProtKB"/>
</dbReference>
<dbReference type="GO" id="GO:0046833">
    <property type="term" value="P:positive regulation of RNA export from nucleus"/>
    <property type="evidence" value="ECO:0000250"/>
    <property type="project" value="UniProtKB"/>
</dbReference>
<dbReference type="GO" id="GO:0051290">
    <property type="term" value="P:protein heterotetramerization"/>
    <property type="evidence" value="ECO:0000250"/>
    <property type="project" value="UniProtKB"/>
</dbReference>
<dbReference type="CDD" id="cd12643">
    <property type="entry name" value="RRM_CFIm68"/>
    <property type="match status" value="1"/>
</dbReference>
<dbReference type="FunFam" id="3.30.70.330:FF:000081">
    <property type="entry name" value="Cleavage and polyadenylation specificity factor subunit 6"/>
    <property type="match status" value="1"/>
</dbReference>
<dbReference type="Gene3D" id="3.30.70.330">
    <property type="match status" value="1"/>
</dbReference>
<dbReference type="InterPro" id="IPR034772">
    <property type="entry name" value="CPSF6/7"/>
</dbReference>
<dbReference type="InterPro" id="IPR034769">
    <property type="entry name" value="CPSF6_RRM"/>
</dbReference>
<dbReference type="InterPro" id="IPR012677">
    <property type="entry name" value="Nucleotide-bd_a/b_plait_sf"/>
</dbReference>
<dbReference type="InterPro" id="IPR035979">
    <property type="entry name" value="RBD_domain_sf"/>
</dbReference>
<dbReference type="InterPro" id="IPR000504">
    <property type="entry name" value="RRM_dom"/>
</dbReference>
<dbReference type="PANTHER" id="PTHR23204">
    <property type="entry name" value="CLEAVAGE AND POLYADENYLATION SPECIFIC FACTOR"/>
    <property type="match status" value="1"/>
</dbReference>
<dbReference type="Pfam" id="PF00076">
    <property type="entry name" value="RRM_1"/>
    <property type="match status" value="1"/>
</dbReference>
<dbReference type="PRINTS" id="PR01217">
    <property type="entry name" value="PRICHEXTENSN"/>
</dbReference>
<dbReference type="SMART" id="SM00360">
    <property type="entry name" value="RRM"/>
    <property type="match status" value="1"/>
</dbReference>
<dbReference type="SUPFAM" id="SSF54928">
    <property type="entry name" value="RNA-binding domain, RBD"/>
    <property type="match status" value="1"/>
</dbReference>
<dbReference type="PROSITE" id="PS50102">
    <property type="entry name" value="RRM"/>
    <property type="match status" value="1"/>
</dbReference>
<sequence>MADGVDHIDIYADVGEEFNQEAEYGGHDQIDLYDDVISPSANNGDAPEDRDYMDTLPPTVGDDVGKGAAPNVVYTYTGKRIALYIGNLTRWTTDEDLTEAVHSLGVNDILEIKFFENRANGQSKGFALVGVGSEASSKKLMDLLPKRELHGQNPVVTPCNKQFLSQFEMQSRKTTQSGQMSGEGKAGPPGGSSRAAFPQGGRGRGRFPGAVPGGDRFPGPTGPGGPPPPFPAGQTPPRPPLGPPGPPGPPGPPPPGQVLPPPLAGPPNRGDRPPPPVLFPGQPFGQPPLGPLPPGPPPPVPGYGPPPGPPPPQQGPPPPPGPFPPRPPGPLGPPLTLAPPPHLPGPPPGAPPPAPHVNPAFFPPPTNSGMPTSDSRGPPPTDPYGRPPPYDRGDYGPPGREMDTARTPLSEAEFEEIMNRNRAISSSAISRAVSDASVGDYGSAIETLVTAISLIKQSKVSADDRCKVLISSLQDCLHGIESKSYGSGSRRRERSRERDHSRSREKSRRHKSRSRDRHDDYYRERSRERERHRDRDRDRDRERDREREYRHR</sequence>
<gene>
    <name evidence="1" type="primary">CPSF6</name>
</gene>
<comment type="function">
    <text evidence="1">Component of the cleavage factor Im (CFIm) complex that functions as an activator of the pre-mRNA 3'-end cleavage and polyadenylation processing required for the maturation of pre-mRNA into functional mRNAs. CFIm contributes to the recruitment of multiprotein complexes on specific sequences on the pre-mRNA 3'-end, so called cleavage and polyadenylation signals (pA signals). Most pre-mRNAs contain multiple pA signals, resulting in alternative cleavage and polyadenylation (APA) producing mRNAs with variable 3'-end formation. The CFIm complex acts as a key regulator of cleavage and polyadenylation site choice during APA through its binding to 5'-UGUA-3' elements localized in the 3'-untranslated region (UTR) for a huge number of pre-mRNAs. CPSF6 enhances NUDT21/CPSF5 binding to 5'-UGUA-3' elements localized upstream of pA signals and promotes RNA looping, and hence activates directly the mRNA 3'-processing machinery. Plays a role in mRNA export.</text>
</comment>
<comment type="subunit">
    <text evidence="1 2">Component of the cleavage factor Im (CFIm) complex which is a heterotetramer composed of two subunits of NUDT21/CPSF5 and two subunits of CPSF6 or CPSF7 or a heterodimer of CPSF6 and CPSF7. The cleavage factor Im (CFIm) complex associates with the CPSF and CSTF complexes to promote the assembly of the core mRNA 3'-processing machinery. Associates with the exon junction complex (EJC). Associates with the 80S ribosome particle. Interacts (via the RRM domain) with NUDT21/CPSF5; this interaction is direct and enhances binding to RNA. Interacts (via Arg/Ser-rich domain) with FIP1L1 (preferentially via unphosphorylated form and Arg/Glu/Asp-rich domain); this interaction mediates, at least in part, the interaction between the CFIm and CPSF complexes and may be inhibited by CPSF6 hyper-phosphorylation. Interacts (via N-terminus) with NXF1; this interaction is direct. Interacts with SRSF3. Interacts with SRSF7. Interacts with SNRNP70. Interacts with TRA2B/SFRS10. Interacts with UPF1. Interacts with UPF3B. Interacts with VIRMA. Interacts (via Arg/Ser-rich domain) with TNPO3; promoting nuclear import of CPSF6 independently of its phosphorylation status (By similarity). Interacts with YTHDC1 (By similarity).</text>
</comment>
<comment type="subcellular location">
    <subcellularLocation>
        <location evidence="1">Nucleus</location>
    </subcellularLocation>
    <subcellularLocation>
        <location evidence="1">Nucleus</location>
        <location evidence="1">Nucleoplasm</location>
    </subcellularLocation>
    <subcellularLocation>
        <location evidence="1">Nucleus speckle</location>
    </subcellularLocation>
    <subcellularLocation>
        <location evidence="1">Cytoplasm</location>
    </subcellularLocation>
    <text evidence="1">Shuttles between the nucleus and the cytoplasm in a transcription- and XPO1/CRM1-independent manner, most probably in complex with the cleavage factor Im complex (CFIm). Colocalizes with PSPC1 in punctate subnuclear structures often located adjacent to nuclear speckles, called paraspeckles, and corresponding to interchromatin granules-associated zones (IGAZs). Distribution in speckles and paraspeckles varies during the cell cycle. Associates at sites of active transcription on nascent perichromatin fibrils (PFs) and perichromatin granules. Nuclear import is mediated via interaction with TNPO3 independently of CPSF6 phosphorylation status.</text>
</comment>
<comment type="domain">
    <text evidence="1">Contains an Arg/Ser-rich domain composed of arginine-serine dipeptide repeats within the C-terminal region that is necessary and sufficient for activating mRNA 3'-processing and alternative polyadenylation (APA).</text>
</comment>
<comment type="PTM">
    <text evidence="1">Phosphorylated. Phosphorylated in the Arg/Ser-rich domain by SRPK1, in vitro.</text>
</comment>
<comment type="PTM">
    <text evidence="1">Symmetrically dimethylated on arginine residues in the GAR motif by PRMT5 in a WDR77- and CLNS1A-dependent manner. Asymmetrically dimethylated on arginine residues in the GAR motif by PRMT1.</text>
</comment>
<comment type="similarity">
    <text evidence="5">Belongs to the RRM CPSF6/7 family.</text>
</comment>
<protein>
    <recommendedName>
        <fullName evidence="1">Cleavage and polyadenylation specificity factor subunit 6</fullName>
    </recommendedName>
</protein>
<feature type="chain" id="PRO_0000081523" description="Cleavage and polyadenylation specificity factor subunit 6">
    <location>
        <begin position="1"/>
        <end position="552"/>
    </location>
</feature>
<feature type="domain" description="RRM" evidence="3">
    <location>
        <begin position="81"/>
        <end position="161"/>
    </location>
</feature>
<feature type="region of interest" description="Necessary for interaction with NXF1" evidence="1">
    <location>
        <begin position="1"/>
        <end position="213"/>
    </location>
</feature>
<feature type="region of interest" description="Necessary for interaction with NUDT21/CPSF5" evidence="1">
    <location>
        <begin position="81"/>
        <end position="161"/>
    </location>
</feature>
<feature type="region of interest" description="Necessary for nuclear paraspeckles localization" evidence="1">
    <location>
        <begin position="81"/>
        <end position="161"/>
    </location>
</feature>
<feature type="region of interest" description="Disordered" evidence="4">
    <location>
        <begin position="169"/>
        <end position="411"/>
    </location>
</feature>
<feature type="region of interest" description="Sufficient for nuclear speckle localization" evidence="1">
    <location>
        <begin position="404"/>
        <end position="552"/>
    </location>
</feature>
<feature type="region of interest" description="Necessary for RNA-binding" evidence="1">
    <location>
        <begin position="405"/>
        <end position="552"/>
    </location>
</feature>
<feature type="region of interest" description="Disordered" evidence="4">
    <location>
        <begin position="479"/>
        <end position="552"/>
    </location>
</feature>
<feature type="region of interest" description="Necessary for interaction with SRSF3, SRSF7 and TRA2B/SFRS10" evidence="1">
    <location>
        <begin position="481"/>
        <end position="552"/>
    </location>
</feature>
<feature type="region of interest" description="Arg/Ser-rich domain" evidence="1">
    <location>
        <begin position="491"/>
        <end position="552"/>
    </location>
</feature>
<feature type="region of interest" description="Sufficient for nuclear targeting" evidence="1">
    <location>
        <begin position="511"/>
        <end position="552"/>
    </location>
</feature>
<feature type="short sequence motif" description="GAR" evidence="1">
    <location>
        <begin position="202"/>
        <end position="206"/>
    </location>
</feature>
<feature type="compositionally biased region" description="Polar residues" evidence="4">
    <location>
        <begin position="169"/>
        <end position="180"/>
    </location>
</feature>
<feature type="compositionally biased region" description="Low complexity" evidence="4">
    <location>
        <begin position="207"/>
        <end position="219"/>
    </location>
</feature>
<feature type="compositionally biased region" description="Pro residues" evidence="4">
    <location>
        <begin position="220"/>
        <end position="265"/>
    </location>
</feature>
<feature type="compositionally biased region" description="Pro residues" evidence="4">
    <location>
        <begin position="285"/>
        <end position="366"/>
    </location>
</feature>
<feature type="compositionally biased region" description="Pro residues" evidence="4">
    <location>
        <begin position="377"/>
        <end position="388"/>
    </location>
</feature>
<feature type="compositionally biased region" description="Basic and acidic residues" evidence="4">
    <location>
        <begin position="389"/>
        <end position="404"/>
    </location>
</feature>
<feature type="compositionally biased region" description="Basic and acidic residues" evidence="4">
    <location>
        <begin position="494"/>
        <end position="504"/>
    </location>
</feature>
<feature type="compositionally biased region" description="Basic residues" evidence="4">
    <location>
        <begin position="505"/>
        <end position="515"/>
    </location>
</feature>
<feature type="compositionally biased region" description="Basic and acidic residues" evidence="4">
    <location>
        <begin position="516"/>
        <end position="552"/>
    </location>
</feature>
<feature type="modified residue" description="Phosphothreonine" evidence="1">
    <location>
        <position position="157"/>
    </location>
</feature>
<feature type="modified residue" description="Phosphothreonine" evidence="1">
    <location>
        <position position="404"/>
    </location>
</feature>
<feature type="modified residue" description="Phosphothreonine" evidence="1">
    <location>
        <position position="407"/>
    </location>
</feature>
<feature type="modified residue" description="Phosphoserine" evidence="1">
    <location>
        <position position="495"/>
    </location>
</feature>
<feature type="modified residue" description="Phosphoserine" evidence="1">
    <location>
        <position position="501"/>
    </location>
</feature>
<feature type="modified residue" description="Phosphoserine" evidence="1">
    <location>
        <position position="512"/>
    </location>
</feature>
<feature type="modified residue" description="Phosphoserine" evidence="1">
    <location>
        <position position="514"/>
    </location>
</feature>
<feature type="modified residue" description="Phosphoserine" evidence="1">
    <location>
        <position position="526"/>
    </location>
</feature>
<keyword id="KW-0963">Cytoplasm</keyword>
<keyword id="KW-0488">Methylation</keyword>
<keyword id="KW-0507">mRNA processing</keyword>
<keyword id="KW-0539">Nucleus</keyword>
<keyword id="KW-0597">Phosphoprotein</keyword>
<keyword id="KW-1185">Reference proteome</keyword>
<keyword id="KW-0694">RNA-binding</keyword>
<accession>Q5NVH8</accession>
<reference key="1">
    <citation type="submission" date="2004-11" db="EMBL/GenBank/DDBJ databases">
        <authorList>
            <consortium name="The German cDNA consortium"/>
        </authorList>
    </citation>
    <scope>NUCLEOTIDE SEQUENCE [LARGE SCALE MRNA]</scope>
    <source>
        <tissue>Brain cortex</tissue>
    </source>
</reference>
<name>CPSF6_PONAB</name>